<protein>
    <recommendedName>
        <fullName evidence="4">Proline-rich antigen</fullName>
        <shortName evidence="4">Pra</shortName>
    </recommendedName>
    <alternativeName>
        <fullName>36 kDa antigen</fullName>
    </alternativeName>
</protein>
<comment type="subcellular location">
    <subcellularLocation>
        <location evidence="5">Cell membrane</location>
        <topology evidence="1">Multi-pass membrane protein</topology>
    </subcellularLocation>
</comment>
<comment type="domain">
    <text evidence="3">Its N-terminus, which contains the proline-rich repeats, is highly immunoreactive.</text>
</comment>
<comment type="similarity">
    <text evidence="5">Belongs to the mycobacterial Pra family.</text>
</comment>
<evidence type="ECO:0000255" key="1"/>
<evidence type="ECO:0000256" key="2">
    <source>
        <dbReference type="SAM" id="MobiDB-lite"/>
    </source>
</evidence>
<evidence type="ECO:0000269" key="3">
    <source>
    </source>
</evidence>
<evidence type="ECO:0000303" key="4">
    <source>
    </source>
</evidence>
<evidence type="ECO:0000305" key="5"/>
<sequence>MTDQPPPSGSNPTPAPPPPGSSGGYEPSFAPSELGSAYPPPTAPPVGGSYPPPPPPGGSYPPPPPPGGSYPPPPPSTGAYAPPPPGPAIRSLPKEAYTFWVTRVLAYVIDNIPATVLLGIGMLIQTLTKQEACVTDITQYNVNQYCATQPTGIGMLAFWFAWLMATAYLVWNYGYRQGATGSSIGKTVMKFKVISEATGQPIGFGMSVVRQLAHFVDAVICCIGFLFPLWDSKRQTLADKIMTTVCLPI</sequence>
<accession>P41484</accession>
<name>PRA_MYCLE</name>
<proteinExistence type="inferred from homology"/>
<dbReference type="EMBL" id="X65546">
    <property type="protein sequence ID" value="CAA46515.1"/>
    <property type="molecule type" value="Genomic_DNA"/>
</dbReference>
<dbReference type="EMBL" id="U15183">
    <property type="protein sequence ID" value="AAA63035.1"/>
    <property type="molecule type" value="Genomic_DNA"/>
</dbReference>
<dbReference type="EMBL" id="AL583925">
    <property type="protein sequence ID" value="CAC31911.1"/>
    <property type="molecule type" value="Genomic_DNA"/>
</dbReference>
<dbReference type="PIR" id="A41497">
    <property type="entry name" value="A41497"/>
</dbReference>
<dbReference type="RefSeq" id="NP_302551.1">
    <property type="nucleotide sequence ID" value="NC_002677.1"/>
</dbReference>
<dbReference type="RefSeq" id="WP_010908871.1">
    <property type="nucleotide sequence ID" value="NC_002677.1"/>
</dbReference>
<dbReference type="STRING" id="272631.gene:17576257"/>
<dbReference type="KEGG" id="mle:ML2395"/>
<dbReference type="PATRIC" id="fig|272631.5.peg.4608"/>
<dbReference type="Leproma" id="ML2395"/>
<dbReference type="eggNOG" id="COG1714">
    <property type="taxonomic scope" value="Bacteria"/>
</dbReference>
<dbReference type="HOGENOM" id="CLU_053152_1_0_11"/>
<dbReference type="OrthoDB" id="9793824at2"/>
<dbReference type="Proteomes" id="UP000000806">
    <property type="component" value="Chromosome"/>
</dbReference>
<dbReference type="GO" id="GO:0005886">
    <property type="term" value="C:plasma membrane"/>
    <property type="evidence" value="ECO:0007669"/>
    <property type="project" value="UniProtKB-SubCell"/>
</dbReference>
<dbReference type="InterPro" id="IPR051791">
    <property type="entry name" value="Pra-immunoreactive"/>
</dbReference>
<dbReference type="InterPro" id="IPR010432">
    <property type="entry name" value="RDD"/>
</dbReference>
<dbReference type="PANTHER" id="PTHR36115:SF6">
    <property type="entry name" value="PROLINE-RICH ANTIGEN HOMOLOG"/>
    <property type="match status" value="1"/>
</dbReference>
<dbReference type="PANTHER" id="PTHR36115">
    <property type="entry name" value="PROLINE-RICH ANTIGEN HOMOLOG-RELATED"/>
    <property type="match status" value="1"/>
</dbReference>
<dbReference type="Pfam" id="PF06271">
    <property type="entry name" value="RDD"/>
    <property type="match status" value="1"/>
</dbReference>
<organism>
    <name type="scientific">Mycobacterium leprae (strain TN)</name>
    <dbReference type="NCBI Taxonomy" id="272631"/>
    <lineage>
        <taxon>Bacteria</taxon>
        <taxon>Bacillati</taxon>
        <taxon>Actinomycetota</taxon>
        <taxon>Actinomycetes</taxon>
        <taxon>Mycobacteriales</taxon>
        <taxon>Mycobacteriaceae</taxon>
        <taxon>Mycobacterium</taxon>
    </lineage>
</organism>
<gene>
    <name type="primary">ag36</name>
    <name evidence="4" type="synonym">pra</name>
    <name type="ordered locus">ML2395</name>
</gene>
<reference key="1">
    <citation type="journal article" date="1990" name="Infect. Immun.">
        <title>A major immunogenic 36,000-molecular-weight antigen from Mycobacterium leprae contains an immunoreactive region of proline-rich repeats.</title>
        <authorList>
            <person name="Thole J.E.R."/>
            <person name="Stabel L.F.E.M."/>
            <person name="Suykerbuyk M.E.G."/>
            <person name="de Wit M.Y.L."/>
            <person name="Klatser P.R."/>
            <person name="Kolk A.H.J."/>
            <person name="Hartskeerl R.A."/>
        </authorList>
    </citation>
    <scope>NUCLEOTIDE SEQUENCE [GENOMIC DNA]</scope>
    <scope>DOMAIN</scope>
    <source>
        <strain>5-3</strain>
    </source>
</reference>
<reference key="2">
    <citation type="submission" date="1994-09" db="EMBL/GenBank/DDBJ databases">
        <authorList>
            <person name="Smith D.R."/>
            <person name="Robison K."/>
        </authorList>
    </citation>
    <scope>NUCLEOTIDE SEQUENCE [GENOMIC DNA]</scope>
</reference>
<reference key="3">
    <citation type="journal article" date="2001" name="Nature">
        <title>Massive gene decay in the leprosy bacillus.</title>
        <authorList>
            <person name="Cole S.T."/>
            <person name="Eiglmeier K."/>
            <person name="Parkhill J."/>
            <person name="James K.D."/>
            <person name="Thomson N.R."/>
            <person name="Wheeler P.R."/>
            <person name="Honore N."/>
            <person name="Garnier T."/>
            <person name="Churcher C.M."/>
            <person name="Harris D.E."/>
            <person name="Mungall K.L."/>
            <person name="Basham D."/>
            <person name="Brown D."/>
            <person name="Chillingworth T."/>
            <person name="Connor R."/>
            <person name="Davies R.M."/>
            <person name="Devlin K."/>
            <person name="Duthoy S."/>
            <person name="Feltwell T."/>
            <person name="Fraser A."/>
            <person name="Hamlin N."/>
            <person name="Holroyd S."/>
            <person name="Hornsby T."/>
            <person name="Jagels K."/>
            <person name="Lacroix C."/>
            <person name="Maclean J."/>
            <person name="Moule S."/>
            <person name="Murphy L.D."/>
            <person name="Oliver K."/>
            <person name="Quail M.A."/>
            <person name="Rajandream M.A."/>
            <person name="Rutherford K.M."/>
            <person name="Rutter S."/>
            <person name="Seeger K."/>
            <person name="Simon S."/>
            <person name="Simmonds M."/>
            <person name="Skelton J."/>
            <person name="Squares R."/>
            <person name="Squares S."/>
            <person name="Stevens K."/>
            <person name="Taylor K."/>
            <person name="Whitehead S."/>
            <person name="Woodward J.R."/>
            <person name="Barrell B.G."/>
        </authorList>
    </citation>
    <scope>NUCLEOTIDE SEQUENCE [LARGE SCALE GENOMIC DNA]</scope>
    <source>
        <strain>TN</strain>
    </source>
</reference>
<keyword id="KW-1003">Cell membrane</keyword>
<keyword id="KW-0472">Membrane</keyword>
<keyword id="KW-1185">Reference proteome</keyword>
<keyword id="KW-0677">Repeat</keyword>
<keyword id="KW-0812">Transmembrane</keyword>
<keyword id="KW-1133">Transmembrane helix</keyword>
<feature type="chain" id="PRO_0000058566" description="Proline-rich antigen">
    <location>
        <begin position="1"/>
        <end position="249"/>
    </location>
</feature>
<feature type="transmembrane region" description="Helical" evidence="1">
    <location>
        <begin position="104"/>
        <end position="124"/>
    </location>
</feature>
<feature type="transmembrane region" description="Helical" evidence="1">
    <location>
        <begin position="151"/>
        <end position="171"/>
    </location>
</feature>
<feature type="transmembrane region" description="Helical" evidence="1">
    <location>
        <begin position="212"/>
        <end position="232"/>
    </location>
</feature>
<feature type="repeat" description="1-1; approximate" evidence="4">
    <location>
        <begin position="34"/>
        <end position="43"/>
    </location>
</feature>
<feature type="repeat" description="1-2" evidence="4">
    <location>
        <begin position="46"/>
        <end position="55"/>
    </location>
</feature>
<feature type="repeat" description="1-3" evidence="4">
    <location>
        <begin position="56"/>
        <end position="65"/>
    </location>
</feature>
<feature type="repeat" description="1-4" evidence="4">
    <location>
        <begin position="66"/>
        <end position="75"/>
    </location>
</feature>
<feature type="repeat" description="1-5; approximate" evidence="4">
    <location>
        <begin position="76"/>
        <end position="85"/>
    </location>
</feature>
<feature type="domain" description="RDD" evidence="1">
    <location>
        <begin position="99"/>
        <end position="242"/>
    </location>
</feature>
<feature type="repeat" description="2-1" evidence="4">
    <location>
        <begin position="101"/>
        <end position="123"/>
    </location>
</feature>
<feature type="repeat" description="2-2" evidence="4">
    <location>
        <begin position="134"/>
        <end position="156"/>
    </location>
</feature>
<feature type="region of interest" description="Disordered" evidence="2">
    <location>
        <begin position="1"/>
        <end position="87"/>
    </location>
</feature>
<feature type="region of interest" description="5 X 10 AA tandem repeats of [PV]-G-G-S-Y-P-P-P-P-P" evidence="4">
    <location>
        <begin position="34"/>
        <end position="85"/>
    </location>
</feature>
<feature type="region of interest" description="2 X 23 AA approximate repeats" evidence="4">
    <location>
        <begin position="101"/>
        <end position="156"/>
    </location>
</feature>
<feature type="compositionally biased region" description="Pro residues" evidence="2">
    <location>
        <begin position="1"/>
        <end position="20"/>
    </location>
</feature>
<feature type="compositionally biased region" description="Pro residues" evidence="2">
    <location>
        <begin position="38"/>
        <end position="87"/>
    </location>
</feature>
<feature type="sequence conflict" description="In Ref. 1; CAA46515." evidence="5" ref="1">
    <original>QL</original>
    <variation>HV</variation>
    <location>
        <begin position="211"/>
        <end position="212"/>
    </location>
</feature>